<proteinExistence type="evidence at transcript level"/>
<reference key="1">
    <citation type="journal article" date="1994" name="J. Biol. Chem.">
        <title>Porins from plants. Molecular cloning and functional characterization of two new members of the porin family.</title>
        <authorList>
            <person name="Fischer K."/>
            <person name="Weber A."/>
            <person name="Brink S."/>
            <person name="Arbinger B."/>
            <person name="Schuenemann D."/>
            <person name="Borchert S."/>
            <person name="Heldt H.W."/>
            <person name="Popp B."/>
            <person name="Benz R."/>
            <person name="Link T."/>
            <person name="Eckerskorn C."/>
            <person name="Fluegge U.I."/>
        </authorList>
    </citation>
    <scope>NUCLEOTIDE SEQUENCE [MRNA]</scope>
    <source>
        <strain>cv. Merit</strain>
        <tissue>Root</tissue>
    </source>
</reference>
<comment type="function">
    <text evidence="1">Forms a channel through the cell membrane that allows diffusion of small hydrophilic molecules. The channel adopts an open conformation at low or zero membrane potential and a closed conformation at potentials above 30-40 mV. The open state has a weak anion selectivity whereas the closed state is cation-selective (By similarity).</text>
</comment>
<comment type="subcellular location">
    <subcellularLocation>
        <location>Plastid outer membrane</location>
    </subcellularLocation>
    <text>Found in non-photosynthetic root plastids only.</text>
</comment>
<comment type="domain">
    <text>Consists mainly of membrane-spanning sided beta-sheets.</text>
</comment>
<comment type="similarity">
    <text evidence="2">Belongs to the eukaryotic mitochondrial porin (TC 1.B.8.1) family.</text>
</comment>
<protein>
    <recommendedName>
        <fullName>Outer plastidial membrane protein porin</fullName>
    </recommendedName>
    <alternativeName>
        <fullName>Voltage-dependent anion-selective channel protein</fullName>
        <shortName>VDAC</shortName>
    </alternativeName>
</protein>
<name>VDAC_MAIZE</name>
<evidence type="ECO:0000250" key="1"/>
<evidence type="ECO:0000305" key="2"/>
<feature type="chain" id="PRO_0000050528" description="Outer plastidial membrane protein porin">
    <location>
        <begin position="1"/>
        <end position="277"/>
    </location>
</feature>
<accession>P42057</accession>
<keyword id="KW-0406">Ion transport</keyword>
<keyword id="KW-0472">Membrane</keyword>
<keyword id="KW-0934">Plastid</keyword>
<keyword id="KW-1002">Plastid outer membrane</keyword>
<keyword id="KW-0626">Porin</keyword>
<keyword id="KW-1185">Reference proteome</keyword>
<keyword id="KW-0812">Transmembrane</keyword>
<keyword id="KW-1134">Transmembrane beta strand</keyword>
<keyword id="KW-0813">Transport</keyword>
<gene>
    <name type="primary">POR1</name>
</gene>
<dbReference type="EMBL" id="X73429">
    <property type="protein sequence ID" value="CAA51828.1"/>
    <property type="molecule type" value="mRNA"/>
</dbReference>
<dbReference type="PIR" id="S34146">
    <property type="entry name" value="S34146"/>
</dbReference>
<dbReference type="SMR" id="P42057"/>
<dbReference type="FunCoup" id="P42057">
    <property type="interactions" value="2944"/>
</dbReference>
<dbReference type="STRING" id="4577.P42057"/>
<dbReference type="PaxDb" id="4577-GRMZM2G155021_P01"/>
<dbReference type="MaizeGDB" id="106348"/>
<dbReference type="eggNOG" id="KOG3126">
    <property type="taxonomic scope" value="Eukaryota"/>
</dbReference>
<dbReference type="InParanoid" id="P42057"/>
<dbReference type="Proteomes" id="UP000007305">
    <property type="component" value="Unplaced"/>
</dbReference>
<dbReference type="ExpressionAtlas" id="P42057">
    <property type="expression patterns" value="baseline and differential"/>
</dbReference>
<dbReference type="GO" id="GO:0031966">
    <property type="term" value="C:mitochondrial membrane"/>
    <property type="evidence" value="ECO:0000314"/>
    <property type="project" value="AgBase"/>
</dbReference>
<dbReference type="GO" id="GO:0005741">
    <property type="term" value="C:mitochondrial outer membrane"/>
    <property type="evidence" value="ECO:0000318"/>
    <property type="project" value="GO_Central"/>
</dbReference>
<dbReference type="GO" id="GO:0009527">
    <property type="term" value="C:plastid outer membrane"/>
    <property type="evidence" value="ECO:0007669"/>
    <property type="project" value="UniProtKB-SubCell"/>
</dbReference>
<dbReference type="GO" id="GO:0046930">
    <property type="term" value="C:pore complex"/>
    <property type="evidence" value="ECO:0007669"/>
    <property type="project" value="UniProtKB-KW"/>
</dbReference>
<dbReference type="GO" id="GO:0015288">
    <property type="term" value="F:porin activity"/>
    <property type="evidence" value="ECO:0007669"/>
    <property type="project" value="UniProtKB-KW"/>
</dbReference>
<dbReference type="GO" id="GO:0008308">
    <property type="term" value="F:voltage-gated monoatomic anion channel activity"/>
    <property type="evidence" value="ECO:0000314"/>
    <property type="project" value="AgBase"/>
</dbReference>
<dbReference type="GO" id="GO:0006820">
    <property type="term" value="P:monoatomic anion transport"/>
    <property type="evidence" value="ECO:0000314"/>
    <property type="project" value="AgBase"/>
</dbReference>
<dbReference type="CDD" id="cd07306">
    <property type="entry name" value="Porin3_VDAC"/>
    <property type="match status" value="1"/>
</dbReference>
<dbReference type="FunFam" id="2.40.160.10:FF:000003">
    <property type="entry name" value="Outer mitochondrial membrane protein porin"/>
    <property type="match status" value="1"/>
</dbReference>
<dbReference type="Gene3D" id="2.40.160.10">
    <property type="entry name" value="Porin"/>
    <property type="match status" value="1"/>
</dbReference>
<dbReference type="InterPro" id="IPR023614">
    <property type="entry name" value="Porin_dom_sf"/>
</dbReference>
<dbReference type="InterPro" id="IPR001925">
    <property type="entry name" value="Porin_Euk"/>
</dbReference>
<dbReference type="InterPro" id="IPR027246">
    <property type="entry name" value="Porin_Euk/Tom40"/>
</dbReference>
<dbReference type="PANTHER" id="PTHR11743:SF62">
    <property type="entry name" value="MITOCHONDRIAL OUTER MEMBRANE PROTEIN PORIN 3"/>
    <property type="match status" value="1"/>
</dbReference>
<dbReference type="PANTHER" id="PTHR11743">
    <property type="entry name" value="VOLTAGE-DEPENDENT ANION-SELECTIVE CHANNEL"/>
    <property type="match status" value="1"/>
</dbReference>
<dbReference type="Pfam" id="PF01459">
    <property type="entry name" value="Porin_3"/>
    <property type="match status" value="1"/>
</dbReference>
<dbReference type="PROSITE" id="PS00558">
    <property type="entry name" value="EUKARYOTIC_PORIN"/>
    <property type="match status" value="1"/>
</dbReference>
<organism>
    <name type="scientific">Zea mays</name>
    <name type="common">Maize</name>
    <dbReference type="NCBI Taxonomy" id="4577"/>
    <lineage>
        <taxon>Eukaryota</taxon>
        <taxon>Viridiplantae</taxon>
        <taxon>Streptophyta</taxon>
        <taxon>Embryophyta</taxon>
        <taxon>Tracheophyta</taxon>
        <taxon>Spermatophyta</taxon>
        <taxon>Magnoliopsida</taxon>
        <taxon>Liliopsida</taxon>
        <taxon>Poales</taxon>
        <taxon>Poaceae</taxon>
        <taxon>PACMAD clade</taxon>
        <taxon>Panicoideae</taxon>
        <taxon>Andropogonodae</taxon>
        <taxon>Andropogoneae</taxon>
        <taxon>Tripsacinae</taxon>
        <taxon>Zea</taxon>
    </lineage>
</organism>
<sequence length="277" mass="29977">MVVAVGLYTDIGKKTRDLLYKDYNTHQKFCLTTSSPNGVAITAAGTRKNESIFGELHTQIKNKKLTVDVKANSESDLLTTITVDEFGTPGLKSIINLVVPDQRSGKLEFQYLHEYAGVNASVGLNSNPMVNLSGAFGSKALSVGVDVSFDTATSDFTKYNAALSLTSPDLIASLHLNNHGDTLVASYYHLVKNHSGTAVGAELSHSMSRNESTLIFGSQHSLDPHTTIKTRFNNYGMASALVQHEWRPKSFVTISGDVDTKAIEKSTKVGLSLVLKH</sequence>